<accession>P27068</accession>
<organism>
    <name type="scientific">Epifagus virginiana</name>
    <name type="common">Beechdrops</name>
    <name type="synonym">Orobanche virginiana</name>
    <dbReference type="NCBI Taxonomy" id="4177"/>
    <lineage>
        <taxon>Eukaryota</taxon>
        <taxon>Viridiplantae</taxon>
        <taxon>Streptophyta</taxon>
        <taxon>Embryophyta</taxon>
        <taxon>Tracheophyta</taxon>
        <taxon>Spermatophyta</taxon>
        <taxon>Magnoliopsida</taxon>
        <taxon>eudicotyledons</taxon>
        <taxon>Gunneridae</taxon>
        <taxon>Pentapetalae</taxon>
        <taxon>asterids</taxon>
        <taxon>lamiids</taxon>
        <taxon>Lamiales</taxon>
        <taxon>Orobanchaceae</taxon>
        <taxon>Orobancheae</taxon>
        <taxon>Epifagus</taxon>
    </lineage>
</organism>
<protein>
    <recommendedName>
        <fullName evidence="1">Small ribosomal subunit protein uS2c</fullName>
    </recommendedName>
    <alternativeName>
        <fullName>Plastid 30S ribosomal protein S2</fullName>
    </alternativeName>
</protein>
<feature type="chain" id="PRO_0000134293" description="Small ribosomal subunit protein uS2c">
    <location>
        <begin position="1"/>
        <end position="237"/>
    </location>
</feature>
<gene>
    <name type="primary">rps2</name>
</gene>
<evidence type="ECO:0000305" key="1"/>
<dbReference type="EMBL" id="X61798">
    <property type="protein sequence ID" value="CAA43901.1"/>
    <property type="molecule type" value="Genomic_DNA"/>
</dbReference>
<dbReference type="EMBL" id="M81884">
    <property type="protein sequence ID" value="AAA65851.1"/>
    <property type="molecule type" value="Genomic_DNA"/>
</dbReference>
<dbReference type="PIR" id="S17795">
    <property type="entry name" value="R3EJ2B"/>
</dbReference>
<dbReference type="RefSeq" id="NP_054377.1">
    <property type="nucleotide sequence ID" value="NC_001568.1"/>
</dbReference>
<dbReference type="SMR" id="P27068"/>
<dbReference type="GeneID" id="801424"/>
<dbReference type="GO" id="GO:0005763">
    <property type="term" value="C:mitochondrial small ribosomal subunit"/>
    <property type="evidence" value="ECO:0007669"/>
    <property type="project" value="TreeGrafter"/>
</dbReference>
<dbReference type="GO" id="GO:0009536">
    <property type="term" value="C:plastid"/>
    <property type="evidence" value="ECO:0007669"/>
    <property type="project" value="UniProtKB-SubCell"/>
</dbReference>
<dbReference type="GO" id="GO:0003735">
    <property type="term" value="F:structural constituent of ribosome"/>
    <property type="evidence" value="ECO:0007669"/>
    <property type="project" value="InterPro"/>
</dbReference>
<dbReference type="GO" id="GO:0006412">
    <property type="term" value="P:translation"/>
    <property type="evidence" value="ECO:0007669"/>
    <property type="project" value="InterPro"/>
</dbReference>
<dbReference type="CDD" id="cd01425">
    <property type="entry name" value="RPS2"/>
    <property type="match status" value="1"/>
</dbReference>
<dbReference type="FunFam" id="3.40.50.10490:FF:000101">
    <property type="match status" value="1"/>
</dbReference>
<dbReference type="FunFam" id="1.10.287.610:FF:000001">
    <property type="entry name" value="30S ribosomal protein S2"/>
    <property type="match status" value="1"/>
</dbReference>
<dbReference type="Gene3D" id="3.40.50.10490">
    <property type="entry name" value="Glucose-6-phosphate isomerase like protein, domain 1"/>
    <property type="match status" value="1"/>
</dbReference>
<dbReference type="Gene3D" id="1.10.287.610">
    <property type="entry name" value="Helix hairpin bin"/>
    <property type="match status" value="1"/>
</dbReference>
<dbReference type="HAMAP" id="MF_00291_B">
    <property type="entry name" value="Ribosomal_uS2_B"/>
    <property type="match status" value="1"/>
</dbReference>
<dbReference type="InterPro" id="IPR001865">
    <property type="entry name" value="Ribosomal_uS2"/>
</dbReference>
<dbReference type="InterPro" id="IPR005706">
    <property type="entry name" value="Ribosomal_uS2_bac/mit/plastid"/>
</dbReference>
<dbReference type="InterPro" id="IPR018130">
    <property type="entry name" value="Ribosomal_uS2_CS"/>
</dbReference>
<dbReference type="InterPro" id="IPR023591">
    <property type="entry name" value="Ribosomal_uS2_flav_dom_sf"/>
</dbReference>
<dbReference type="NCBIfam" id="TIGR01011">
    <property type="entry name" value="rpsB_bact"/>
    <property type="match status" value="1"/>
</dbReference>
<dbReference type="PANTHER" id="PTHR12534">
    <property type="entry name" value="30S RIBOSOMAL PROTEIN S2 PROKARYOTIC AND ORGANELLAR"/>
    <property type="match status" value="1"/>
</dbReference>
<dbReference type="PANTHER" id="PTHR12534:SF0">
    <property type="entry name" value="SMALL RIBOSOMAL SUBUNIT PROTEIN US2M"/>
    <property type="match status" value="1"/>
</dbReference>
<dbReference type="Pfam" id="PF00318">
    <property type="entry name" value="Ribosomal_S2"/>
    <property type="match status" value="1"/>
</dbReference>
<dbReference type="PRINTS" id="PR00395">
    <property type="entry name" value="RIBOSOMALS2"/>
</dbReference>
<dbReference type="SUPFAM" id="SSF52313">
    <property type="entry name" value="Ribosomal protein S2"/>
    <property type="match status" value="1"/>
</dbReference>
<dbReference type="PROSITE" id="PS00963">
    <property type="entry name" value="RIBOSOMAL_S2_2"/>
    <property type="match status" value="1"/>
</dbReference>
<keyword id="KW-0934">Plastid</keyword>
<keyword id="KW-0687">Ribonucleoprotein</keyword>
<keyword id="KW-0689">Ribosomal protein</keyword>
<name>RR2_EPIVI</name>
<geneLocation type="non-photosynthetic plastid"/>
<comment type="subcellular location">
    <subcellularLocation>
        <location>Plastid</location>
    </subcellularLocation>
</comment>
<comment type="similarity">
    <text evidence="1">Belongs to the universal ribosomal protein uS2 family.</text>
</comment>
<sequence length="237" mass="26757">MTRRYWNIDLEEMIGAGVSFGHGTRKWNPKMAPYISVKHKGIHFTNLTKTARFLSEACDLVFYAASRGKQFLIVDTKNKAADSAAWAAIKARCHCVNKKWPGGMLTNWSTTETRLHKLRDLIMEQKAGRLNRLKKKDEAAVKRQLARLQTYLGGIKYMTRLPDIVIIVDQHEEYKALHECITIGIPTIGLIDTNCDPDLADISIPANDDAISSIRLILNKLVFAICEGRSGYIIKNI</sequence>
<proteinExistence type="inferred from homology"/>
<reference key="1">
    <citation type="journal article" date="1991" name="EMBO J.">
        <title>Plastid translation and transcription genes in a non-photosynthetic plant: intact, missing and pseudo genes.</title>
        <authorList>
            <person name="Morden C.W."/>
            <person name="Wolfe K.H."/>
            <person name="Depamphilis C.W."/>
            <person name="Palmer J.D."/>
        </authorList>
    </citation>
    <scope>NUCLEOTIDE SEQUENCE [GENOMIC DNA]</scope>
</reference>
<reference key="2">
    <citation type="journal article" date="1992" name="Proc. Natl. Acad. Sci. U.S.A.">
        <title>Function and evolution of a minimal plastid genome from a nonphotosynthetic parasitic plant.</title>
        <authorList>
            <person name="Wolfe K.H."/>
            <person name="Morden C.W."/>
            <person name="Palmer J.D."/>
        </authorList>
    </citation>
    <scope>NUCLEOTIDE SEQUENCE [LARGE SCALE GENOMIC DNA]</scope>
</reference>
<reference key="3">
    <citation type="journal article" date="1992" name="J. Mol. Evol.">
        <title>Rapid evolution of the plastid translational apparatus in a nonphotosynthetic plant: loss or accelerated sequence evolution of tRNA and ribosomal protein genes.</title>
        <authorList>
            <person name="Wolfe K.H."/>
            <person name="Morden C.W."/>
            <person name="Ems S.C."/>
            <person name="Palmer J.D."/>
        </authorList>
    </citation>
    <scope>NUCLEOTIDE SEQUENCE [GENOMIC DNA]</scope>
</reference>